<reference key="1">
    <citation type="journal article" date="2000" name="Science">
        <title>The genome sequence of Drosophila melanogaster.</title>
        <authorList>
            <person name="Adams M.D."/>
            <person name="Celniker S.E."/>
            <person name="Holt R.A."/>
            <person name="Evans C.A."/>
            <person name="Gocayne J.D."/>
            <person name="Amanatides P.G."/>
            <person name="Scherer S.E."/>
            <person name="Li P.W."/>
            <person name="Hoskins R.A."/>
            <person name="Galle R.F."/>
            <person name="George R.A."/>
            <person name="Lewis S.E."/>
            <person name="Richards S."/>
            <person name="Ashburner M."/>
            <person name="Henderson S.N."/>
            <person name="Sutton G.G."/>
            <person name="Wortman J.R."/>
            <person name="Yandell M.D."/>
            <person name="Zhang Q."/>
            <person name="Chen L.X."/>
            <person name="Brandon R.C."/>
            <person name="Rogers Y.-H.C."/>
            <person name="Blazej R.G."/>
            <person name="Champe M."/>
            <person name="Pfeiffer B.D."/>
            <person name="Wan K.H."/>
            <person name="Doyle C."/>
            <person name="Baxter E.G."/>
            <person name="Helt G."/>
            <person name="Nelson C.R."/>
            <person name="Miklos G.L.G."/>
            <person name="Abril J.F."/>
            <person name="Agbayani A."/>
            <person name="An H.-J."/>
            <person name="Andrews-Pfannkoch C."/>
            <person name="Baldwin D."/>
            <person name="Ballew R.M."/>
            <person name="Basu A."/>
            <person name="Baxendale J."/>
            <person name="Bayraktaroglu L."/>
            <person name="Beasley E.M."/>
            <person name="Beeson K.Y."/>
            <person name="Benos P.V."/>
            <person name="Berman B.P."/>
            <person name="Bhandari D."/>
            <person name="Bolshakov S."/>
            <person name="Borkova D."/>
            <person name="Botchan M.R."/>
            <person name="Bouck J."/>
            <person name="Brokstein P."/>
            <person name="Brottier P."/>
            <person name="Burtis K.C."/>
            <person name="Busam D.A."/>
            <person name="Butler H."/>
            <person name="Cadieu E."/>
            <person name="Center A."/>
            <person name="Chandra I."/>
            <person name="Cherry J.M."/>
            <person name="Cawley S."/>
            <person name="Dahlke C."/>
            <person name="Davenport L.B."/>
            <person name="Davies P."/>
            <person name="de Pablos B."/>
            <person name="Delcher A."/>
            <person name="Deng Z."/>
            <person name="Mays A.D."/>
            <person name="Dew I."/>
            <person name="Dietz S.M."/>
            <person name="Dodson K."/>
            <person name="Doup L.E."/>
            <person name="Downes M."/>
            <person name="Dugan-Rocha S."/>
            <person name="Dunkov B.C."/>
            <person name="Dunn P."/>
            <person name="Durbin K.J."/>
            <person name="Evangelista C.C."/>
            <person name="Ferraz C."/>
            <person name="Ferriera S."/>
            <person name="Fleischmann W."/>
            <person name="Fosler C."/>
            <person name="Gabrielian A.E."/>
            <person name="Garg N.S."/>
            <person name="Gelbart W.M."/>
            <person name="Glasser K."/>
            <person name="Glodek A."/>
            <person name="Gong F."/>
            <person name="Gorrell J.H."/>
            <person name="Gu Z."/>
            <person name="Guan P."/>
            <person name="Harris M."/>
            <person name="Harris N.L."/>
            <person name="Harvey D.A."/>
            <person name="Heiman T.J."/>
            <person name="Hernandez J.R."/>
            <person name="Houck J."/>
            <person name="Hostin D."/>
            <person name="Houston K.A."/>
            <person name="Howland T.J."/>
            <person name="Wei M.-H."/>
            <person name="Ibegwam C."/>
            <person name="Jalali M."/>
            <person name="Kalush F."/>
            <person name="Karpen G.H."/>
            <person name="Ke Z."/>
            <person name="Kennison J.A."/>
            <person name="Ketchum K.A."/>
            <person name="Kimmel B.E."/>
            <person name="Kodira C.D."/>
            <person name="Kraft C.L."/>
            <person name="Kravitz S."/>
            <person name="Kulp D."/>
            <person name="Lai Z."/>
            <person name="Lasko P."/>
            <person name="Lei Y."/>
            <person name="Levitsky A.A."/>
            <person name="Li J.H."/>
            <person name="Li Z."/>
            <person name="Liang Y."/>
            <person name="Lin X."/>
            <person name="Liu X."/>
            <person name="Mattei B."/>
            <person name="McIntosh T.C."/>
            <person name="McLeod M.P."/>
            <person name="McPherson D."/>
            <person name="Merkulov G."/>
            <person name="Milshina N.V."/>
            <person name="Mobarry C."/>
            <person name="Morris J."/>
            <person name="Moshrefi A."/>
            <person name="Mount S.M."/>
            <person name="Moy M."/>
            <person name="Murphy B."/>
            <person name="Murphy L."/>
            <person name="Muzny D.M."/>
            <person name="Nelson D.L."/>
            <person name="Nelson D.R."/>
            <person name="Nelson K.A."/>
            <person name="Nixon K."/>
            <person name="Nusskern D.R."/>
            <person name="Pacleb J.M."/>
            <person name="Palazzolo M."/>
            <person name="Pittman G.S."/>
            <person name="Pan S."/>
            <person name="Pollard J."/>
            <person name="Puri V."/>
            <person name="Reese M.G."/>
            <person name="Reinert K."/>
            <person name="Remington K."/>
            <person name="Saunders R.D.C."/>
            <person name="Scheeler F."/>
            <person name="Shen H."/>
            <person name="Shue B.C."/>
            <person name="Siden-Kiamos I."/>
            <person name="Simpson M."/>
            <person name="Skupski M.P."/>
            <person name="Smith T.J."/>
            <person name="Spier E."/>
            <person name="Spradling A.C."/>
            <person name="Stapleton M."/>
            <person name="Strong R."/>
            <person name="Sun E."/>
            <person name="Svirskas R."/>
            <person name="Tector C."/>
            <person name="Turner R."/>
            <person name="Venter E."/>
            <person name="Wang A.H."/>
            <person name="Wang X."/>
            <person name="Wang Z.-Y."/>
            <person name="Wassarman D.A."/>
            <person name="Weinstock G.M."/>
            <person name="Weissenbach J."/>
            <person name="Williams S.M."/>
            <person name="Woodage T."/>
            <person name="Worley K.C."/>
            <person name="Wu D."/>
            <person name="Yang S."/>
            <person name="Yao Q.A."/>
            <person name="Ye J."/>
            <person name="Yeh R.-F."/>
            <person name="Zaveri J.S."/>
            <person name="Zhan M."/>
            <person name="Zhang G."/>
            <person name="Zhao Q."/>
            <person name="Zheng L."/>
            <person name="Zheng X.H."/>
            <person name="Zhong F.N."/>
            <person name="Zhong W."/>
            <person name="Zhou X."/>
            <person name="Zhu S.C."/>
            <person name="Zhu X."/>
            <person name="Smith H.O."/>
            <person name="Gibbs R.A."/>
            <person name="Myers E.W."/>
            <person name="Rubin G.M."/>
            <person name="Venter J.C."/>
        </authorList>
    </citation>
    <scope>NUCLEOTIDE SEQUENCE [LARGE SCALE GENOMIC DNA]</scope>
    <source>
        <strain>Berkeley</strain>
    </source>
</reference>
<reference key="2">
    <citation type="journal article" date="2002" name="Genome Biol.">
        <title>Annotation of the Drosophila melanogaster euchromatic genome: a systematic review.</title>
        <authorList>
            <person name="Misra S."/>
            <person name="Crosby M.A."/>
            <person name="Mungall C.J."/>
            <person name="Matthews B.B."/>
            <person name="Campbell K.S."/>
            <person name="Hradecky P."/>
            <person name="Huang Y."/>
            <person name="Kaminker J.S."/>
            <person name="Millburn G.H."/>
            <person name="Prochnik S.E."/>
            <person name="Smith C.D."/>
            <person name="Tupy J.L."/>
            <person name="Whitfield E.J."/>
            <person name="Bayraktaroglu L."/>
            <person name="Berman B.P."/>
            <person name="Bettencourt B.R."/>
            <person name="Celniker S.E."/>
            <person name="de Grey A.D.N.J."/>
            <person name="Drysdale R.A."/>
            <person name="Harris N.L."/>
            <person name="Richter J."/>
            <person name="Russo S."/>
            <person name="Schroeder A.J."/>
            <person name="Shu S.Q."/>
            <person name="Stapleton M."/>
            <person name="Yamada C."/>
            <person name="Ashburner M."/>
            <person name="Gelbart W.M."/>
            <person name="Rubin G.M."/>
            <person name="Lewis S.E."/>
        </authorList>
    </citation>
    <scope>GENOME REANNOTATION</scope>
    <source>
        <strain>Berkeley</strain>
    </source>
</reference>
<reference key="3">
    <citation type="journal article" date="2002" name="Genome Biol.">
        <title>A Drosophila full-length cDNA resource.</title>
        <authorList>
            <person name="Stapleton M."/>
            <person name="Carlson J.W."/>
            <person name="Brokstein P."/>
            <person name="Yu C."/>
            <person name="Champe M."/>
            <person name="George R.A."/>
            <person name="Guarin H."/>
            <person name="Kronmiller B."/>
            <person name="Pacleb J.M."/>
            <person name="Park S."/>
            <person name="Wan K.H."/>
            <person name="Rubin G.M."/>
            <person name="Celniker S.E."/>
        </authorList>
    </citation>
    <scope>NUCLEOTIDE SEQUENCE [LARGE SCALE MRNA]</scope>
    <source>
        <strain>Berkeley</strain>
    </source>
</reference>
<reference key="4">
    <citation type="journal article" date="2010" name="Hum. Mol. Genet.">
        <title>Genetic modifiers of abnormal organelle biogenesis in a Drosophila model of BLOC-1 deficiency.</title>
        <authorList>
            <person name="Cheli V.T."/>
            <person name="Daniels R.W."/>
            <person name="Godoy R."/>
            <person name="Hoyle D.J."/>
            <person name="Kandachar V."/>
            <person name="Starcevic M."/>
            <person name="Martinez-Agosto J.A."/>
            <person name="Poole S."/>
            <person name="DiAntonio A."/>
            <person name="Lloyd V.K."/>
            <person name="Chang H.C."/>
            <person name="Krantz D.E."/>
            <person name="Dell'Angelica E.C."/>
        </authorList>
    </citation>
    <scope>IDENTIFICATION IN THE BLOC-1 COMPLEX</scope>
    <scope>FUNCTION</scope>
    <scope>INTERACTION WITH PLDN AND SNAPIN</scope>
</reference>
<reference key="5">
    <citation type="journal article" date="2017" name="ENeuro">
        <title>The BLOC-1 Subunit Pallidin Facilitates Activity-Dependent Synaptic Vesicle Recycling.</title>
        <authorList>
            <person name="Chen X."/>
            <person name="Ma W."/>
            <person name="Zhang S."/>
            <person name="Paluch J."/>
            <person name="Guo W."/>
            <person name="Dickman D.K."/>
        </authorList>
    </citation>
    <scope>FUNCTION</scope>
</reference>
<accession>Q9VVT5</accession>
<proteinExistence type="evidence at protein level"/>
<dbReference type="EMBL" id="AE014296">
    <property type="protein sequence ID" value="AAF49223.1"/>
    <property type="molecule type" value="Genomic_DNA"/>
</dbReference>
<dbReference type="EMBL" id="AY071009">
    <property type="protein sequence ID" value="AAL48631.1"/>
    <property type="molecule type" value="mRNA"/>
</dbReference>
<dbReference type="RefSeq" id="NP_001262023.1">
    <property type="nucleotide sequence ID" value="NM_001275094.1"/>
</dbReference>
<dbReference type="RefSeq" id="NP_649064.1">
    <property type="nucleotide sequence ID" value="NM_140807.4"/>
</dbReference>
<dbReference type="SMR" id="Q9VVT5"/>
<dbReference type="BioGRID" id="65333">
    <property type="interactions" value="49"/>
</dbReference>
<dbReference type="ComplexPortal" id="CPX-2753">
    <property type="entry name" value="BLOC-1 complex"/>
</dbReference>
<dbReference type="FunCoup" id="Q9VVT5">
    <property type="interactions" value="30"/>
</dbReference>
<dbReference type="IntAct" id="Q9VVT5">
    <property type="interactions" value="11"/>
</dbReference>
<dbReference type="STRING" id="7227.FBpp0074829"/>
<dbReference type="PaxDb" id="7227-FBpp0074829"/>
<dbReference type="DNASU" id="40052"/>
<dbReference type="EnsemblMetazoa" id="FBtr0075062">
    <property type="protein sequence ID" value="FBpp0074829"/>
    <property type="gene ID" value="FBgn0036819"/>
</dbReference>
<dbReference type="EnsemblMetazoa" id="FBtr0333708">
    <property type="protein sequence ID" value="FBpp0305857"/>
    <property type="gene ID" value="FBgn0036819"/>
</dbReference>
<dbReference type="GeneID" id="40052"/>
<dbReference type="KEGG" id="dme:Dmel_CG6856"/>
<dbReference type="UCSC" id="CG6856-RA">
    <property type="organism name" value="d. melanogaster"/>
</dbReference>
<dbReference type="AGR" id="FB:FBgn0036819"/>
<dbReference type="CTD" id="40052"/>
<dbReference type="FlyBase" id="FBgn0036819">
    <property type="gene designation" value="Dysb"/>
</dbReference>
<dbReference type="VEuPathDB" id="VectorBase:FBgn0036819"/>
<dbReference type="eggNOG" id="ENOG502QRS9">
    <property type="taxonomic scope" value="Eukaryota"/>
</dbReference>
<dbReference type="GeneTree" id="ENSGT00940000176058"/>
<dbReference type="HOGENOM" id="CLU_085499_0_0_1"/>
<dbReference type="InParanoid" id="Q9VVT5"/>
<dbReference type="OMA" id="KSWFLLH"/>
<dbReference type="OrthoDB" id="2445127at2759"/>
<dbReference type="PhylomeDB" id="Q9VVT5"/>
<dbReference type="SignaLink" id="Q9VVT5"/>
<dbReference type="BioGRID-ORCS" id="40052">
    <property type="hits" value="0 hits in 3 CRISPR screens"/>
</dbReference>
<dbReference type="GenomeRNAi" id="40052"/>
<dbReference type="PRO" id="PR:Q9VVT5"/>
<dbReference type="Proteomes" id="UP000000803">
    <property type="component" value="Chromosome 3L"/>
</dbReference>
<dbReference type="Bgee" id="FBgn0036819">
    <property type="expression patterns" value="Expressed in saliva-secreting gland and 24 other cell types or tissues"/>
</dbReference>
<dbReference type="ExpressionAtlas" id="Q9VVT5">
    <property type="expression patterns" value="baseline and differential"/>
</dbReference>
<dbReference type="GO" id="GO:0031083">
    <property type="term" value="C:BLOC-1 complex"/>
    <property type="evidence" value="ECO:0000316"/>
    <property type="project" value="FlyBase"/>
</dbReference>
<dbReference type="GO" id="GO:0098527">
    <property type="term" value="C:neuromuscular junction of somatic muscle"/>
    <property type="evidence" value="ECO:0000314"/>
    <property type="project" value="FlyBase"/>
</dbReference>
<dbReference type="GO" id="GO:0008021">
    <property type="term" value="C:synaptic vesicle"/>
    <property type="evidence" value="ECO:0000314"/>
    <property type="project" value="FlyBase"/>
</dbReference>
<dbReference type="GO" id="GO:0008344">
    <property type="term" value="P:adult locomotory behavior"/>
    <property type="evidence" value="ECO:0000315"/>
    <property type="project" value="FlyBase"/>
</dbReference>
<dbReference type="GO" id="GO:0008057">
    <property type="term" value="P:eye pigment granule organization"/>
    <property type="evidence" value="ECO:0000315"/>
    <property type="project" value="UniProtKB"/>
</dbReference>
<dbReference type="GO" id="GO:0007616">
    <property type="term" value="P:long-term memory"/>
    <property type="evidence" value="ECO:0000315"/>
    <property type="project" value="FlyBase"/>
</dbReference>
<dbReference type="GO" id="GO:0048047">
    <property type="term" value="P:mating behavior, sex discrimination"/>
    <property type="evidence" value="ECO:0000315"/>
    <property type="project" value="FlyBase"/>
</dbReference>
<dbReference type="GO" id="GO:0045963">
    <property type="term" value="P:negative regulation of dopamine metabolic process"/>
    <property type="evidence" value="ECO:0000314"/>
    <property type="project" value="FlyBase"/>
</dbReference>
<dbReference type="GO" id="GO:0008355">
    <property type="term" value="P:olfactory learning"/>
    <property type="evidence" value="ECO:0000315"/>
    <property type="project" value="FlyBase"/>
</dbReference>
<dbReference type="GO" id="GO:0051968">
    <property type="term" value="P:positive regulation of synaptic transmission, glutamatergic"/>
    <property type="evidence" value="ECO:0000315"/>
    <property type="project" value="FlyBase"/>
</dbReference>
<dbReference type="GO" id="GO:1900073">
    <property type="term" value="P:regulation of neuromuscular synaptic transmission"/>
    <property type="evidence" value="ECO:0000315"/>
    <property type="project" value="FlyBase"/>
</dbReference>
<dbReference type="GO" id="GO:0050807">
    <property type="term" value="P:regulation of synapse organization"/>
    <property type="evidence" value="ECO:0000316"/>
    <property type="project" value="FlyBase"/>
</dbReference>
<dbReference type="GO" id="GO:0048167">
    <property type="term" value="P:regulation of synaptic plasticity"/>
    <property type="evidence" value="ECO:0000315"/>
    <property type="project" value="FlyBase"/>
</dbReference>
<dbReference type="GO" id="GO:0007614">
    <property type="term" value="P:short-term memory"/>
    <property type="evidence" value="ECO:0000315"/>
    <property type="project" value="FlyBase"/>
</dbReference>
<dbReference type="GO" id="GO:0036466">
    <property type="term" value="P:synaptic vesicle recycling via endosome"/>
    <property type="evidence" value="ECO:0000315"/>
    <property type="project" value="FlyBase"/>
</dbReference>
<dbReference type="InterPro" id="IPR007531">
    <property type="entry name" value="Dysbindin"/>
</dbReference>
<dbReference type="PANTHER" id="PTHR16294:SF6">
    <property type="entry name" value="DYNAMIN N-TERMINAL DOMAIN-CONTAINING PROTEIN"/>
    <property type="match status" value="1"/>
</dbReference>
<dbReference type="PANTHER" id="PTHR16294">
    <property type="entry name" value="DYSTROBREVIN BINDING PROTEIN 1 DYSBINDIN"/>
    <property type="match status" value="1"/>
</dbReference>
<comment type="function">
    <text evidence="2 3">Component of the biogenesis of lysosome-related organelles complex-1 (BLOC-1) involved in pigment granule biogenesis and membrane trafficking in synapses (PubMed:20015953, PubMed:28317021). In response to high synaptic activity at neuromuscular junctions, stabilizes Pldn protein levels and, together with Pldn, plays a role in promoting efficient synaptic vesicle recycling and re-formation through early endosomes (PubMed:28317021).</text>
</comment>
<comment type="subunit">
    <text evidence="2">Component of the biogenesis of lysosome-related organelles complex-1 (BLOC-1) composed of Blos1, Blos2, Blos3, Blos4, Dysb, Muted, Pldn and Snapin. Interacts with Pldn and Snapin.</text>
</comment>
<comment type="similarity">
    <text evidence="4">Belongs to the dysbindin family.</text>
</comment>
<feature type="chain" id="PRO_0000420202" description="Dysbindin protein homolog">
    <location>
        <begin position="1"/>
        <end position="288"/>
    </location>
</feature>
<feature type="coiled-coil region" evidence="1">
    <location>
        <begin position="147"/>
        <end position="239"/>
    </location>
</feature>
<organism>
    <name type="scientific">Drosophila melanogaster</name>
    <name type="common">Fruit fly</name>
    <dbReference type="NCBI Taxonomy" id="7227"/>
    <lineage>
        <taxon>Eukaryota</taxon>
        <taxon>Metazoa</taxon>
        <taxon>Ecdysozoa</taxon>
        <taxon>Arthropoda</taxon>
        <taxon>Hexapoda</taxon>
        <taxon>Insecta</taxon>
        <taxon>Pterygota</taxon>
        <taxon>Neoptera</taxon>
        <taxon>Endopterygota</taxon>
        <taxon>Diptera</taxon>
        <taxon>Brachycera</taxon>
        <taxon>Muscomorpha</taxon>
        <taxon>Ephydroidea</taxon>
        <taxon>Drosophilidae</taxon>
        <taxon>Drosophila</taxon>
        <taxon>Sophophora</taxon>
    </lineage>
</organism>
<protein>
    <recommendedName>
        <fullName>Dysbindin protein homolog</fullName>
    </recommendedName>
    <alternativeName>
        <fullName>Biogenesis of lysosome-related organelles complex 1 subunit 8</fullName>
        <shortName>BLOC-1 subunit 8</shortName>
    </alternativeName>
</protein>
<evidence type="ECO:0000255" key="1"/>
<evidence type="ECO:0000269" key="2">
    <source>
    </source>
</evidence>
<evidence type="ECO:0000269" key="3">
    <source>
    </source>
</evidence>
<evidence type="ECO:0000305" key="4"/>
<evidence type="ECO:0000312" key="5">
    <source>
        <dbReference type="FlyBase" id="FBgn0036819"/>
    </source>
</evidence>
<sequence>MFGNLKKKLSSAIQEGLVISENLQQQYRQRVSSGNSGSSQASGITTPISPLGLNESLSSSRSSSLSLSAPFQLTDGVPSHLNVAAGCSLLAKYEDDWQQIHGANEKNAEKAAQIANQISGIQDQASHQHRIMSELNSSLAGIPTLIAQLQNSSQVLNSLEEMGKQLEIELEKLEDLREECELQEFILEQQFQLSRHKQKKLNELEQYRQQIAQKHQSKIKDQEQTLLKLQRERQAVFDDAFREDMEEYKQRGQLTKIQTTSNKLALEEVVLEANEVETKDALEQFLNG</sequence>
<name>DTBP1_DROME</name>
<gene>
    <name evidence="5" type="primary">Dysb</name>
    <name evidence="5" type="ORF">CG6856</name>
</gene>
<keyword id="KW-0175">Coiled coil</keyword>
<keyword id="KW-1185">Reference proteome</keyword>